<accession>A6XMY0</accession>
<evidence type="ECO:0000256" key="1">
    <source>
        <dbReference type="SAM" id="MobiDB-lite"/>
    </source>
</evidence>
<evidence type="ECO:0000269" key="2">
    <source>
    </source>
</evidence>
<evidence type="ECO:0000269" key="3">
    <source>
    </source>
</evidence>
<evidence type="ECO:0000269" key="4">
    <source>
    </source>
</evidence>
<evidence type="ECO:0000303" key="5">
    <source>
    </source>
</evidence>
<evidence type="ECO:0000303" key="6">
    <source>
    </source>
</evidence>
<evidence type="ECO:0000303" key="7">
    <source>
    </source>
</evidence>
<evidence type="ECO:0000305" key="8">
    <source>
    </source>
</evidence>
<organism>
    <name type="scientific">Hyas araneus</name>
    <name type="common">Atlantic lyre crab</name>
    <name type="synonym">Great spider crab</name>
    <dbReference type="NCBI Taxonomy" id="361634"/>
    <lineage>
        <taxon>Eukaryota</taxon>
        <taxon>Metazoa</taxon>
        <taxon>Ecdysozoa</taxon>
        <taxon>Arthropoda</taxon>
        <taxon>Crustacea</taxon>
        <taxon>Multicrustacea</taxon>
        <taxon>Malacostraca</taxon>
        <taxon>Eumalacostraca</taxon>
        <taxon>Eucarida</taxon>
        <taxon>Decapoda</taxon>
        <taxon>Pleocyemata</taxon>
        <taxon>Brachyura</taxon>
        <taxon>Eubrachyura</taxon>
        <taxon>Majoidea</taxon>
        <taxon>Majidae</taxon>
        <taxon>Hyas</taxon>
    </lineage>
</organism>
<comment type="function">
    <text evidence="2 3 4">Antimicrobial peptide that has a large activity spectrum with activity against Gram-positive, Gram-negative bacteria, as well as against fungi (PubMed:17658600, PubMed:23326415). Shows activity at micromolar concentrations (PubMed:17658600, PubMed:23326415). Displays minimal inhibitory concentration (MIC) values lower than minimal bactericidal concentrations (MBC) (PubMed:17658600). Synthetic peptides with similar activities than the full length peptide (composed of the first 23 or 25 amino acids (Arasin 1(26-48) or Arasin 1(26-50))) may have a dual mode of action depending on the peptide concentrations (PubMed:23326415, PubMed:26860543). At MIC concentrations, the peptide penetrates into the cytoplasm of target cells (tested on the Gram-negative E.coli) (PubMed:26860543). The two inner membrane proteins YgdD and SbmA may be required for this uptake (PubMed:26860543). At concentrations higher than MIC, arasin may act by disrupting membranes (PubMed:23326415). Full-length and N-terminal peptides do not show hemolytic activity (PubMed:23326415).</text>
</comment>
<comment type="subunit">
    <text evidence="3">Interacts with chitin through the N-terminal region (26-48) (PubMed:23326415). This interaction may be important, since chitin is a component of the fungal cell wall, as well as of the crab exoskeleton (permitting a possible action of arasin in wound healing in case of lesions) (PubMed:23326415).</text>
</comment>
<comment type="tissue specificity">
    <text evidence="2">Mainly expressed in hemocytes. No or very low expression in heart, gills, inestines, and epidermis.</text>
</comment>
<comment type="PTM">
    <text evidence="3">Disulfide bonds are important for activity especially against Gram-negative bacteria, since the linearization of the peptide causes a strong decrease of activity on these bacteria.</text>
</comment>
<comment type="mass spectrometry" mass="4342.06" method="Electrospray" evidence="2">
    <text>Monoisotopic mass.</text>
</comment>
<comment type="online information" name="The antimicrobial peptide database">
    <link uri="https://wangapd3.com/database/query_output.php?ID=00987"/>
</comment>
<sequence length="64" mass="7227">MERRTLLVVLLVCSCVVAAAAEASPSRWPSPGRPRPFPGRPKPIFRPRPCNCYAPPCPCDRWRH</sequence>
<name>ARA1_HYAAR</name>
<protein>
    <recommendedName>
        <fullName evidence="5">Arasin 1</fullName>
        <shortName evidence="5">Ara-1</shortName>
    </recommendedName>
    <alternativeName>
        <fullName evidence="6">Proline-rich antimicrobial peptide</fullName>
        <shortName evidence="6 7">PR-AMP</shortName>
        <shortName evidence="6">Pro-rich AMP</shortName>
    </alternativeName>
</protein>
<dbReference type="EMBL" id="DQ859904">
    <property type="protein sequence ID" value="ABI74601.1"/>
    <property type="molecule type" value="mRNA"/>
</dbReference>
<dbReference type="SMR" id="A6XMY0"/>
<dbReference type="GO" id="GO:0008061">
    <property type="term" value="F:chitin binding"/>
    <property type="evidence" value="ECO:0007669"/>
    <property type="project" value="UniProtKB-KW"/>
</dbReference>
<dbReference type="GO" id="GO:0042742">
    <property type="term" value="P:defense response to bacterium"/>
    <property type="evidence" value="ECO:0000314"/>
    <property type="project" value="UniProtKB"/>
</dbReference>
<dbReference type="GO" id="GO:0050832">
    <property type="term" value="P:defense response to fungus"/>
    <property type="evidence" value="ECO:0000314"/>
    <property type="project" value="UniProtKB"/>
</dbReference>
<dbReference type="GO" id="GO:0002376">
    <property type="term" value="P:immune system process"/>
    <property type="evidence" value="ECO:0007669"/>
    <property type="project" value="UniProtKB-KW"/>
</dbReference>
<dbReference type="GO" id="GO:0031640">
    <property type="term" value="P:killing of cells of another organism"/>
    <property type="evidence" value="ECO:0000314"/>
    <property type="project" value="UniProtKB"/>
</dbReference>
<proteinExistence type="evidence at protein level"/>
<keyword id="KW-0044">Antibiotic</keyword>
<keyword id="KW-0929">Antimicrobial</keyword>
<keyword id="KW-0147">Chitin-binding</keyword>
<keyword id="KW-0903">Direct protein sequencing</keyword>
<keyword id="KW-1015">Disulfide bond</keyword>
<keyword id="KW-0295">Fungicide</keyword>
<keyword id="KW-0391">Immunity</keyword>
<keyword id="KW-0732">Signal</keyword>
<reference key="1">
    <citation type="journal article" date="2008" name="Dev. Comp. Immunol.">
        <title>Arasin 1, a proline-arginine-rich antimicrobial peptide isolated from the spider crab, Hyas araneus.</title>
        <authorList>
            <person name="Stensvag K."/>
            <person name="Haug T."/>
            <person name="Sperstad S.V."/>
            <person name="Rekdal O."/>
            <person name="Indrevoll B."/>
            <person name="Styrvold O.B."/>
        </authorList>
    </citation>
    <scope>NUCLEOTIDE SEQUENCE [MRNA]</scope>
    <scope>PROTEIN SEQUENCE OF 26-62</scope>
    <scope>FUNCTION</scope>
    <scope>TISSUE SPECIFICITY</scope>
    <scope>MASS SPECTROMETRY</scope>
    <scope>SYNTHESIS</scope>
    <scope>DISULFIDE BOND</scope>
    <source>
        <tissue>Hemocyte</tissue>
    </source>
</reference>
<reference key="2">
    <citation type="journal article" date="2013" name="PLoS ONE">
        <title>Structure-activity relationships of the antimicrobial peptide arasin 1 - and mode of action studies of the N-terminal, proline-rich region.</title>
        <authorList>
            <person name="Paulsen V.S."/>
            <person name="Blencke H.M."/>
            <person name="Benincasa M."/>
            <person name="Haug T."/>
            <person name="Eksteen J.J."/>
            <person name="Styrvold O.B."/>
            <person name="Scocchi M."/>
            <person name="Stensvaag K."/>
        </authorList>
    </citation>
    <scope>FUNCTION OF N-TERMINAL PEPTIDE 26-48</scope>
    <scope>SUBUNIT</scope>
    <scope>SYNTHESIS</scope>
</reference>
<reference key="3">
    <citation type="journal article" date="2016" name="Microbiology">
        <title>Inner membrane proteins YgdD and SbmA are required for the complete susceptibility of Escherichia coli to the proline-rich antimicrobial peptide arasin 1(1-25).</title>
        <authorList>
            <person name="Paulsen V.S."/>
            <person name="Mardirossian M."/>
            <person name="Blencke H.M."/>
            <person name="Benincasa M."/>
            <person name="Runti G."/>
            <person name="Nepa M."/>
            <person name="Haug T."/>
            <person name="Stensvaag K."/>
            <person name="Scocchi M."/>
        </authorList>
    </citation>
    <scope>FUNCTION OF N-TERMINAL PEPTIDE 26-50</scope>
</reference>
<feature type="signal peptide" evidence="2">
    <location>
        <begin position="1"/>
        <end position="25"/>
    </location>
</feature>
<feature type="chain" id="PRO_5002704929" description="Arasin 1" evidence="2">
    <location>
        <begin position="26"/>
        <end position="62"/>
    </location>
</feature>
<feature type="propeptide" id="PRO_0000449320" evidence="2">
    <location>
        <begin position="63"/>
        <end position="64"/>
    </location>
</feature>
<feature type="region of interest" description="Disordered" evidence="1">
    <location>
        <begin position="22"/>
        <end position="43"/>
    </location>
</feature>
<feature type="region of interest" description="Pro/Arg-rich region responsible for antibacterial and antifungal activity" evidence="3">
    <location>
        <begin position="26"/>
        <end position="48"/>
    </location>
</feature>
<feature type="region of interest" description="Cystein-containing C-terminal region important for stability but not essential for antimicrobial activity" evidence="8">
    <location>
        <begin position="49"/>
        <end position="62"/>
    </location>
</feature>
<feature type="compositionally biased region" description="Pro residues" evidence="1">
    <location>
        <begin position="31"/>
        <end position="43"/>
    </location>
</feature>
<feature type="disulfide bond" evidence="2">
    <location>
        <begin position="50"/>
        <end position="59"/>
    </location>
</feature>
<feature type="disulfide bond" evidence="2">
    <location>
        <begin position="52"/>
        <end position="57"/>
    </location>
</feature>